<organism>
    <name type="scientific">Chlamydomonas reinhardtii</name>
    <name type="common">Chlamydomonas smithii</name>
    <dbReference type="NCBI Taxonomy" id="3055"/>
    <lineage>
        <taxon>Eukaryota</taxon>
        <taxon>Viridiplantae</taxon>
        <taxon>Chlorophyta</taxon>
        <taxon>core chlorophytes</taxon>
        <taxon>Chlorophyceae</taxon>
        <taxon>CS clade</taxon>
        <taxon>Chlamydomonadales</taxon>
        <taxon>Chlamydomonadaceae</taxon>
        <taxon>Chlamydomonas</taxon>
    </lineage>
</organism>
<evidence type="ECO:0000250" key="1">
    <source>
        <dbReference type="UniProtKB" id="P68363"/>
    </source>
</evidence>
<evidence type="ECO:0000250" key="2">
    <source>
        <dbReference type="UniProtKB" id="Q13509"/>
    </source>
</evidence>
<evidence type="ECO:0000256" key="3">
    <source>
        <dbReference type="SAM" id="MobiDB-lite"/>
    </source>
</evidence>
<evidence type="ECO:0000305" key="4"/>
<feature type="chain" id="PRO_0000048335" description="Tubulin beta-1/beta-2 chain">
    <location>
        <begin position="1"/>
        <end position="443"/>
    </location>
</feature>
<feature type="region of interest" description="Disordered" evidence="3">
    <location>
        <begin position="424"/>
        <end position="443"/>
    </location>
</feature>
<feature type="compositionally biased region" description="Acidic residues" evidence="3">
    <location>
        <begin position="429"/>
        <end position="443"/>
    </location>
</feature>
<feature type="binding site" evidence="2">
    <location>
        <position position="11"/>
    </location>
    <ligand>
        <name>GTP</name>
        <dbReference type="ChEBI" id="CHEBI:37565"/>
    </ligand>
</feature>
<feature type="binding site" evidence="1">
    <location>
        <position position="69"/>
    </location>
    <ligand>
        <name>GTP</name>
        <dbReference type="ChEBI" id="CHEBI:37565"/>
    </ligand>
</feature>
<feature type="binding site" evidence="1">
    <location>
        <position position="69"/>
    </location>
    <ligand>
        <name>Mg(2+)</name>
        <dbReference type="ChEBI" id="CHEBI:18420"/>
    </ligand>
</feature>
<feature type="binding site" evidence="2">
    <location>
        <position position="138"/>
    </location>
    <ligand>
        <name>GTP</name>
        <dbReference type="ChEBI" id="CHEBI:37565"/>
    </ligand>
</feature>
<feature type="binding site" evidence="2">
    <location>
        <position position="142"/>
    </location>
    <ligand>
        <name>GTP</name>
        <dbReference type="ChEBI" id="CHEBI:37565"/>
    </ligand>
</feature>
<feature type="binding site" evidence="2">
    <location>
        <position position="143"/>
    </location>
    <ligand>
        <name>GTP</name>
        <dbReference type="ChEBI" id="CHEBI:37565"/>
    </ligand>
</feature>
<feature type="binding site" evidence="2">
    <location>
        <position position="144"/>
    </location>
    <ligand>
        <name>GTP</name>
        <dbReference type="ChEBI" id="CHEBI:37565"/>
    </ligand>
</feature>
<feature type="binding site" evidence="2">
    <location>
        <position position="204"/>
    </location>
    <ligand>
        <name>GTP</name>
        <dbReference type="ChEBI" id="CHEBI:37565"/>
    </ligand>
</feature>
<feature type="binding site" evidence="2">
    <location>
        <position position="226"/>
    </location>
    <ligand>
        <name>GTP</name>
        <dbReference type="ChEBI" id="CHEBI:37565"/>
    </ligand>
</feature>
<sequence length="443" mass="49619">MREIVHIQGGQCGNQIGAKFWEVVSDEHGIDPTGTYHGDSDLQLERINVYFNEATGGRYVPRAILMDLEPGTMDSVRSGPYGQIFRPDNFVFGQTGAGNNWAKGHYTEGAELIDSVLDVVRKEAESCDCLQGFQVCHSLGGGTGSGMGTLLISKIREEYPDRMMLTFSVVPSPKVSDTVVEPYNATLSVHQLVENADECMVLDNEALYDICFRTLKLTTPTFGDLNHLISAVMSGITCCLRFPGQLNADLRKLAVNLIPFPRLHFFMVGFTPLTSRGSQQYRALTVPELTQQMWDAKNMMCAADPRHGRYLTASALFRGRMSTKEVDEQMLNVQNKNSSYFVEWIPNNVKSSVCDIPPKGLKMSATFIGNSTAIQEMFKRVSEQFTAMFRRKAFLHWYTGEGMDEMEFTEAESNMNDLVSEYQQYQDASAEEEGEFEGEEEEA</sequence>
<keyword id="KW-0002">3D-structure</keyword>
<keyword id="KW-0963">Cytoplasm</keyword>
<keyword id="KW-0206">Cytoskeleton</keyword>
<keyword id="KW-0342">GTP-binding</keyword>
<keyword id="KW-0460">Magnesium</keyword>
<keyword id="KW-0479">Metal-binding</keyword>
<keyword id="KW-0493">Microtubule</keyword>
<keyword id="KW-0547">Nucleotide-binding</keyword>
<comment type="function">
    <text>Tubulin is the major constituent of microtubules, a cylinder consisting of laterally associated linear protofilaments composed of alpha- and beta-tubulin heterodimers. Microtubules grow by the addition of GTP-tubulin dimers to the microtubule end, where a stabilizing cap forms. Below the cap, tubulin dimers are in GDP-bound state, owing to GTPase activity of alpha-tubulin.</text>
</comment>
<comment type="cofactor">
    <cofactor evidence="1">
        <name>Mg(2+)</name>
        <dbReference type="ChEBI" id="CHEBI:18420"/>
    </cofactor>
</comment>
<comment type="subunit">
    <text>Dimer of alpha and beta chains. A typical microtubule is a hollow water-filled tube with an outer diameter of 25 nm and an inner diameter of 15 nM. Alpha-beta heterodimers associate head-to-tail to form protofilaments running lengthwise along the microtubule wall with the beta-tubulin subunit facing the microtubule plus end conferring a structural polarity. Microtubules usually have 13 protofilaments but different protofilament numbers can be found in some organisms and specialized cells.</text>
</comment>
<comment type="subcellular location">
    <subcellularLocation>
        <location>Cytoplasm</location>
        <location>Cytoskeleton</location>
    </subcellularLocation>
</comment>
<comment type="miscellaneous">
    <text>The 2 beta-tubulin genes of Chlamydomonas (beta-1 and beta-2) encode the same protein.</text>
</comment>
<comment type="similarity">
    <text evidence="4">Belongs to the tubulin family.</text>
</comment>
<gene>
    <name type="primary">TUBB1</name>
</gene>
<gene>
    <name type="primary">TUBB2</name>
</gene>
<dbReference type="EMBL" id="M10064">
    <property type="protein sequence ID" value="AAA33101.1"/>
    <property type="molecule type" value="Genomic_DNA"/>
</dbReference>
<dbReference type="EMBL" id="K03281">
    <property type="protein sequence ID" value="AAA33102.1"/>
    <property type="molecule type" value="Genomic_DNA"/>
</dbReference>
<dbReference type="EMBL" id="K01808">
    <property type="protein sequence ID" value="AAA33099.1"/>
    <property type="molecule type" value="Genomic_DNA"/>
</dbReference>
<dbReference type="EMBL" id="K01809">
    <property type="protein sequence ID" value="AAA33100.1"/>
    <property type="molecule type" value="Genomic_DNA"/>
</dbReference>
<dbReference type="PIR" id="A29141">
    <property type="entry name" value="UBKM"/>
</dbReference>
<dbReference type="RefSeq" id="XP_001693997.1">
    <property type="nucleotide sequence ID" value="XM_001693945.1"/>
</dbReference>
<dbReference type="RefSeq" id="XP_001694072.1">
    <property type="nucleotide sequence ID" value="XM_001694020.1"/>
</dbReference>
<dbReference type="PDB" id="6U42">
    <property type="method" value="EM"/>
    <property type="resolution" value="3.40 A"/>
    <property type="chains" value="0A/0C/0E/0G/0I/0K/0M/0O/0Q/0S/0U/0W/0Y/1/1A/1C/1E/1G/1K/1M/1O/1Q/1S/1U/1W/2A/2C/2E/2G/2I=1-443"/>
</dbReference>
<dbReference type="PDB" id="6VE7">
    <property type="method" value="EM"/>
    <property type="resolution" value="3.60 A"/>
    <property type="chains" value="4/8/9/I/J/K/N/O/Q/R/T/U/V/a/b/i/j/p/q/r/t/u/v/w=1-443"/>
</dbReference>
<dbReference type="PDB" id="7JU4">
    <property type="method" value="EM"/>
    <property type="resolution" value="3.40 A"/>
    <property type="chains" value="6/8/C/G/I/K/O/Q/S/W/Y/i/k/y=1-443"/>
</dbReference>
<dbReference type="PDB" id="7KZM">
    <property type="method" value="EM"/>
    <property type="resolution" value="7.50 A"/>
    <property type="chains" value="A1/A3/A5/A7/B1/B3/B5/B7=1-443"/>
</dbReference>
<dbReference type="PDB" id="7KZO">
    <property type="method" value="EM"/>
    <property type="resolution" value="3.30 A"/>
    <property type="chains" value="A1/A3/A5/A7/B1/B3/B5/B7=1-443"/>
</dbReference>
<dbReference type="PDB" id="7N61">
    <property type="method" value="EM"/>
    <property type="resolution" value="3.50 A"/>
    <property type="chains" value="1a/1c/1e/1g/2a/2c/2e/2g/3a/3c/3e/3g/4a/4c/4e/4g/5a/5c/5e/5g/6a/6c/6e/6g/7a/7c/7e/7g/8a/8c=1-443"/>
</dbReference>
<dbReference type="PDB" id="7N6G">
    <property type="method" value="EM"/>
    <property type="resolution" value="3.60 A"/>
    <property type="chains" value="1a/1c/1e/1g/2a/2c/2e/2g/3a/3c/3e/3g/4a/4c/4e/4g/5a/5c/5e/5g/6a/6c/6e/6g/7a/7c/7e/7g/8a/8c=1-443"/>
</dbReference>
<dbReference type="PDB" id="7SOM">
    <property type="method" value="EM"/>
    <property type="resolution" value="3.70 A"/>
    <property type="chains" value="AA/AC/AE/AG/AI/AK/BA/BC/BE/BG/BI/BK/CA/CC/CE/CG/CI/CK/DC/DE/DG/DI/DK/EA/EC/EE/EG/EI/EK/FA=1-443"/>
</dbReference>
<dbReference type="PDB" id="7SQC">
    <property type="method" value="EM"/>
    <property type="resolution" value="3.80 A"/>
    <property type="chains" value="NC/NE/NG/NI/NK/NM/NO/OC/OE/OG/OI/OK/OM/OO/OQ/PC/PE/PG/PI/PK/PM/PO/PQ/QC/QE/QG/QI/QK/QM/QO=1-443"/>
</dbReference>
<dbReference type="PDB" id="8GLV">
    <property type="method" value="EM"/>
    <property type="resolution" value="3.10 A"/>
    <property type="chains" value="0A/0C/0E/0G/0I/0K/0M/0O/0Q/0S/0U/0W/0Y/1A/1C/1E/1G/1K/1M/1O/1Q/1S/1U/1W/2A/2C/2E/2G/2I/2K=1-443"/>
</dbReference>
<dbReference type="PDBsum" id="6U42"/>
<dbReference type="PDBsum" id="6VE7"/>
<dbReference type="PDBsum" id="7JU4"/>
<dbReference type="PDBsum" id="7KZM"/>
<dbReference type="PDBsum" id="7KZO"/>
<dbReference type="PDBsum" id="7N61"/>
<dbReference type="PDBsum" id="7N6G"/>
<dbReference type="PDBsum" id="7SOM"/>
<dbReference type="PDBsum" id="7SQC"/>
<dbReference type="PDBsum" id="8GLV"/>
<dbReference type="EMDB" id="EMD-20631"/>
<dbReference type="EMDB" id="EMD-20858"/>
<dbReference type="EMDB" id="EMD-22481"/>
<dbReference type="EMDB" id="EMD-23082"/>
<dbReference type="EMDB" id="EMD-23084"/>
<dbReference type="EMDB" id="EMD-24191"/>
<dbReference type="EMDB" id="EMD-24207"/>
<dbReference type="EMDB" id="EMD-25361"/>
<dbReference type="EMDB" id="EMD-25381"/>
<dbReference type="EMDB" id="EMD-40220"/>
<dbReference type="SMR" id="P04690"/>
<dbReference type="PaxDb" id="3055-EDP02933"/>
<dbReference type="ProMEX" id="P04690"/>
<dbReference type="EnsemblPlants" id="PNW76052">
    <property type="protein sequence ID" value="PNW76052"/>
    <property type="gene ID" value="CHLRE_12g549550v5"/>
</dbReference>
<dbReference type="EnsemblPlants" id="PNW76245">
    <property type="protein sequence ID" value="PNW76245"/>
    <property type="gene ID" value="CHLRE_12g542250v5"/>
</dbReference>
<dbReference type="Gramene" id="PNW76052">
    <property type="protein sequence ID" value="PNW76052"/>
    <property type="gene ID" value="CHLRE_12g549550v5"/>
</dbReference>
<dbReference type="Gramene" id="PNW76245">
    <property type="protein sequence ID" value="PNW76245"/>
    <property type="gene ID" value="CHLRE_12g542250v5"/>
</dbReference>
<dbReference type="KEGG" id="cre:CHLRE_12g542250v5"/>
<dbReference type="KEGG" id="cre:CHLRE_12g549550v5"/>
<dbReference type="eggNOG" id="KOG1375">
    <property type="taxonomic scope" value="Eukaryota"/>
</dbReference>
<dbReference type="HOGENOM" id="CLU_015718_1_1_1"/>
<dbReference type="OMA" id="WEEERGH"/>
<dbReference type="OrthoDB" id="563915at2759"/>
<dbReference type="GO" id="GO:0005737">
    <property type="term" value="C:cytoplasm"/>
    <property type="evidence" value="ECO:0007669"/>
    <property type="project" value="UniProtKB-KW"/>
</dbReference>
<dbReference type="GO" id="GO:0005874">
    <property type="term" value="C:microtubule"/>
    <property type="evidence" value="ECO:0007669"/>
    <property type="project" value="UniProtKB-KW"/>
</dbReference>
<dbReference type="GO" id="GO:0005525">
    <property type="term" value="F:GTP binding"/>
    <property type="evidence" value="ECO:0007669"/>
    <property type="project" value="UniProtKB-KW"/>
</dbReference>
<dbReference type="GO" id="GO:0003924">
    <property type="term" value="F:GTPase activity"/>
    <property type="evidence" value="ECO:0007669"/>
    <property type="project" value="InterPro"/>
</dbReference>
<dbReference type="GO" id="GO:0046872">
    <property type="term" value="F:metal ion binding"/>
    <property type="evidence" value="ECO:0007669"/>
    <property type="project" value="UniProtKB-KW"/>
</dbReference>
<dbReference type="GO" id="GO:0005200">
    <property type="term" value="F:structural constituent of cytoskeleton"/>
    <property type="evidence" value="ECO:0007669"/>
    <property type="project" value="InterPro"/>
</dbReference>
<dbReference type="GO" id="GO:0007017">
    <property type="term" value="P:microtubule-based process"/>
    <property type="evidence" value="ECO:0007669"/>
    <property type="project" value="InterPro"/>
</dbReference>
<dbReference type="CDD" id="cd02187">
    <property type="entry name" value="beta_tubulin"/>
    <property type="match status" value="1"/>
</dbReference>
<dbReference type="FunFam" id="1.10.287.600:FF:000006">
    <property type="entry name" value="Tubulin beta chain"/>
    <property type="match status" value="1"/>
</dbReference>
<dbReference type="FunFam" id="3.30.1330.20:FF:000002">
    <property type="entry name" value="Tubulin beta chain"/>
    <property type="match status" value="1"/>
</dbReference>
<dbReference type="FunFam" id="3.40.50.1440:FF:000005">
    <property type="entry name" value="Tubulin beta chain"/>
    <property type="match status" value="1"/>
</dbReference>
<dbReference type="Gene3D" id="1.10.287.600">
    <property type="entry name" value="Helix hairpin bin"/>
    <property type="match status" value="1"/>
</dbReference>
<dbReference type="Gene3D" id="3.30.1330.20">
    <property type="entry name" value="Tubulin/FtsZ, C-terminal domain"/>
    <property type="match status" value="1"/>
</dbReference>
<dbReference type="Gene3D" id="3.40.50.1440">
    <property type="entry name" value="Tubulin/FtsZ, GTPase domain"/>
    <property type="match status" value="1"/>
</dbReference>
<dbReference type="InterPro" id="IPR013838">
    <property type="entry name" value="Beta-tubulin_BS"/>
</dbReference>
<dbReference type="InterPro" id="IPR002453">
    <property type="entry name" value="Beta_tubulin"/>
</dbReference>
<dbReference type="InterPro" id="IPR008280">
    <property type="entry name" value="Tub_FtsZ_C"/>
</dbReference>
<dbReference type="InterPro" id="IPR000217">
    <property type="entry name" value="Tubulin"/>
</dbReference>
<dbReference type="InterPro" id="IPR037103">
    <property type="entry name" value="Tubulin/FtsZ-like_C"/>
</dbReference>
<dbReference type="InterPro" id="IPR018316">
    <property type="entry name" value="Tubulin/FtsZ_2-layer-sand-dom"/>
</dbReference>
<dbReference type="InterPro" id="IPR036525">
    <property type="entry name" value="Tubulin/FtsZ_GTPase_sf"/>
</dbReference>
<dbReference type="InterPro" id="IPR023123">
    <property type="entry name" value="Tubulin_C"/>
</dbReference>
<dbReference type="InterPro" id="IPR017975">
    <property type="entry name" value="Tubulin_CS"/>
</dbReference>
<dbReference type="InterPro" id="IPR003008">
    <property type="entry name" value="Tubulin_FtsZ_GTPase"/>
</dbReference>
<dbReference type="PANTHER" id="PTHR11588">
    <property type="entry name" value="TUBULIN"/>
    <property type="match status" value="1"/>
</dbReference>
<dbReference type="Pfam" id="PF00091">
    <property type="entry name" value="Tubulin"/>
    <property type="match status" value="1"/>
</dbReference>
<dbReference type="Pfam" id="PF03953">
    <property type="entry name" value="Tubulin_C"/>
    <property type="match status" value="1"/>
</dbReference>
<dbReference type="PRINTS" id="PR01163">
    <property type="entry name" value="BETATUBULIN"/>
</dbReference>
<dbReference type="PRINTS" id="PR01161">
    <property type="entry name" value="TUBULIN"/>
</dbReference>
<dbReference type="SMART" id="SM00864">
    <property type="entry name" value="Tubulin"/>
    <property type="match status" value="1"/>
</dbReference>
<dbReference type="SMART" id="SM00865">
    <property type="entry name" value="Tubulin_C"/>
    <property type="match status" value="1"/>
</dbReference>
<dbReference type="SUPFAM" id="SSF55307">
    <property type="entry name" value="Tubulin C-terminal domain-like"/>
    <property type="match status" value="1"/>
</dbReference>
<dbReference type="SUPFAM" id="SSF52490">
    <property type="entry name" value="Tubulin nucleotide-binding domain-like"/>
    <property type="match status" value="1"/>
</dbReference>
<dbReference type="PROSITE" id="PS00227">
    <property type="entry name" value="TUBULIN"/>
    <property type="match status" value="1"/>
</dbReference>
<dbReference type="PROSITE" id="PS00228">
    <property type="entry name" value="TUBULIN_B_AUTOREG"/>
    <property type="match status" value="1"/>
</dbReference>
<accession>P04690</accession>
<name>TBB_CHLRE</name>
<reference key="1">
    <citation type="journal article" date="1984" name="Mol. Cell. Biol.">
        <title>The two beta-tubulin genes of Chlamydomonas reinhardtii code for identical proteins.</title>
        <authorList>
            <person name="Youngblom J."/>
            <person name="Schloss J.A."/>
            <person name="Silflow C.D."/>
        </authorList>
    </citation>
    <scope>NUCLEOTIDE SEQUENCE [GENOMIC DNA]</scope>
</reference>
<reference key="2">
    <citation type="journal article" date="1984" name="Mol. Cell. Biol.">
        <title>Repeated consensus sequence and pseudopromoters in the four coordinately regulated tubulin genes of Chlamydomonas reinhardi.</title>
        <authorList>
            <person name="Brunke K.J."/>
            <person name="Anthony J.G."/>
            <person name="Sternberg E.J."/>
            <person name="Weeks D.P."/>
        </authorList>
    </citation>
    <scope>NUCLEOTIDE SEQUENCE [GENOMIC DNA] OF 1-43</scope>
</reference>
<protein>
    <recommendedName>
        <fullName>Tubulin beta-1/beta-2 chain</fullName>
    </recommendedName>
    <alternativeName>
        <fullName>Beta-tubulin</fullName>
    </alternativeName>
</protein>
<proteinExistence type="evidence at protein level"/>